<sequence>MALLPQEVIRKKRDGGRLDRAEIADFVSGLADGSISEGQVAAFAMATWFSGMNRDECVALTLAMRDSGDILDWSEFGRPIVDKHSTGGVGDNVSLMLAPIVAACGPNVPMISGRGLGHTGGTLDKLESIPGYNIQPSPELFRQIVDEVGCAIIGQTANLAPADKRLYAIRDVTATVDSVPLITASILSKKLAAGLQSLVLDVKLGNGSFMTDARATKTLARSLVDVANGAGVNTLALITDMNEPLADAVGNALEVENCLAYLRGEKSGTRLDQVVMAFAAEMLVAARMAAHPAAGEAMARQALESGDAMERFALMVHRLGGPADFVDRSEAYLEKAPAVVIVPANRDGYLAACETRELGMAVIALGGGRTRPDDRIDHRVGLAGLKPLGTKVERGEPIAFVHAADRQQAEAVRDRIAGFYAIADERPASRPVIVSRIT</sequence>
<evidence type="ECO:0000255" key="1">
    <source>
        <dbReference type="HAMAP-Rule" id="MF_01628"/>
    </source>
</evidence>
<accession>C3MBH0</accession>
<comment type="function">
    <text evidence="1">The enzymes which catalyze the reversible phosphorolysis of pyrimidine nucleosides are involved in the degradation of these compounds and in their utilization as carbon and energy sources, or in the rescue of pyrimidine bases for nucleotide synthesis.</text>
</comment>
<comment type="catalytic activity">
    <reaction evidence="1">
        <text>thymidine + phosphate = 2-deoxy-alpha-D-ribose 1-phosphate + thymine</text>
        <dbReference type="Rhea" id="RHEA:16037"/>
        <dbReference type="ChEBI" id="CHEBI:17748"/>
        <dbReference type="ChEBI" id="CHEBI:17821"/>
        <dbReference type="ChEBI" id="CHEBI:43474"/>
        <dbReference type="ChEBI" id="CHEBI:57259"/>
        <dbReference type="EC" id="2.4.2.4"/>
    </reaction>
</comment>
<comment type="pathway">
    <text evidence="1">Pyrimidine metabolism; dTMP biosynthesis via salvage pathway; dTMP from thymine: step 1/2.</text>
</comment>
<comment type="subunit">
    <text evidence="1">Homodimer.</text>
</comment>
<comment type="similarity">
    <text evidence="1">Belongs to the thymidine/pyrimidine-nucleoside phosphorylase family.</text>
</comment>
<proteinExistence type="inferred from homology"/>
<protein>
    <recommendedName>
        <fullName evidence="1">Thymidine phosphorylase</fullName>
        <ecNumber evidence="1">2.4.2.4</ecNumber>
    </recommendedName>
    <alternativeName>
        <fullName evidence="1">TdRPase</fullName>
    </alternativeName>
</protein>
<gene>
    <name evidence="1" type="primary">deoA</name>
    <name type="ordered locus">NGR_c34550</name>
</gene>
<name>TYPH_SINFN</name>
<dbReference type="EC" id="2.4.2.4" evidence="1"/>
<dbReference type="EMBL" id="CP001389">
    <property type="protein sequence ID" value="ACP27179.1"/>
    <property type="molecule type" value="Genomic_DNA"/>
</dbReference>
<dbReference type="RefSeq" id="WP_012709926.1">
    <property type="nucleotide sequence ID" value="NC_012587.1"/>
</dbReference>
<dbReference type="RefSeq" id="YP_002827932.1">
    <property type="nucleotide sequence ID" value="NC_012587.1"/>
</dbReference>
<dbReference type="SMR" id="C3MBH0"/>
<dbReference type="STRING" id="394.NGR_c34550"/>
<dbReference type="KEGG" id="rhi:NGR_c34550"/>
<dbReference type="PATRIC" id="fig|394.7.peg.6302"/>
<dbReference type="eggNOG" id="COG0213">
    <property type="taxonomic scope" value="Bacteria"/>
</dbReference>
<dbReference type="HOGENOM" id="CLU_025040_0_1_5"/>
<dbReference type="OrthoDB" id="9763887at2"/>
<dbReference type="UniPathway" id="UPA00578">
    <property type="reaction ID" value="UER00638"/>
</dbReference>
<dbReference type="Proteomes" id="UP000001054">
    <property type="component" value="Chromosome"/>
</dbReference>
<dbReference type="GO" id="GO:0005829">
    <property type="term" value="C:cytosol"/>
    <property type="evidence" value="ECO:0007669"/>
    <property type="project" value="TreeGrafter"/>
</dbReference>
<dbReference type="GO" id="GO:0004645">
    <property type="term" value="F:1,4-alpha-oligoglucan phosphorylase activity"/>
    <property type="evidence" value="ECO:0007669"/>
    <property type="project" value="InterPro"/>
</dbReference>
<dbReference type="GO" id="GO:0009032">
    <property type="term" value="F:thymidine phosphorylase activity"/>
    <property type="evidence" value="ECO:0007669"/>
    <property type="project" value="UniProtKB-UniRule"/>
</dbReference>
<dbReference type="GO" id="GO:0006206">
    <property type="term" value="P:pyrimidine nucleobase metabolic process"/>
    <property type="evidence" value="ECO:0007669"/>
    <property type="project" value="InterPro"/>
</dbReference>
<dbReference type="GO" id="GO:0046104">
    <property type="term" value="P:thymidine metabolic process"/>
    <property type="evidence" value="ECO:0007669"/>
    <property type="project" value="UniProtKB-UniRule"/>
</dbReference>
<dbReference type="FunFam" id="3.40.1030.10:FF:000003">
    <property type="entry name" value="Pyrimidine-nucleoside phosphorylase"/>
    <property type="match status" value="1"/>
</dbReference>
<dbReference type="Gene3D" id="3.40.1030.10">
    <property type="entry name" value="Nucleoside phosphorylase/phosphoribosyltransferase catalytic domain"/>
    <property type="match status" value="1"/>
</dbReference>
<dbReference type="Gene3D" id="3.90.1170.30">
    <property type="entry name" value="Pyrimidine nucleoside phosphorylase-like, C-terminal domain"/>
    <property type="match status" value="1"/>
</dbReference>
<dbReference type="Gene3D" id="1.20.970.10">
    <property type="entry name" value="Transferase, Pyrimidine Nucleoside Phosphorylase, Chain C"/>
    <property type="match status" value="1"/>
</dbReference>
<dbReference type="HAMAP" id="MF_01628">
    <property type="entry name" value="Thymid_phosp"/>
    <property type="match status" value="1"/>
</dbReference>
<dbReference type="InterPro" id="IPR000312">
    <property type="entry name" value="Glycosyl_Trfase_fam3"/>
</dbReference>
<dbReference type="InterPro" id="IPR017459">
    <property type="entry name" value="Glycosyl_Trfase_fam3_N_dom"/>
</dbReference>
<dbReference type="InterPro" id="IPR036320">
    <property type="entry name" value="Glycosyl_Trfase_fam3_N_dom_sf"/>
</dbReference>
<dbReference type="InterPro" id="IPR035902">
    <property type="entry name" value="Nuc_phospho_transferase"/>
</dbReference>
<dbReference type="InterPro" id="IPR036566">
    <property type="entry name" value="PYNP-like_C_sf"/>
</dbReference>
<dbReference type="InterPro" id="IPR013102">
    <property type="entry name" value="PYNP_C"/>
</dbReference>
<dbReference type="InterPro" id="IPR018090">
    <property type="entry name" value="Pyrmidine_PPas_bac/euk"/>
</dbReference>
<dbReference type="InterPro" id="IPR017872">
    <property type="entry name" value="Pyrmidine_PPase_CS"/>
</dbReference>
<dbReference type="InterPro" id="IPR000053">
    <property type="entry name" value="Thymidine/pyrmidine_PPase"/>
</dbReference>
<dbReference type="InterPro" id="IPR013465">
    <property type="entry name" value="Thymidine_Pase"/>
</dbReference>
<dbReference type="NCBIfam" id="NF004490">
    <property type="entry name" value="PRK05820.1"/>
    <property type="match status" value="1"/>
</dbReference>
<dbReference type="NCBIfam" id="TIGR02643">
    <property type="entry name" value="T_phosphoryl"/>
    <property type="match status" value="1"/>
</dbReference>
<dbReference type="NCBIfam" id="TIGR02644">
    <property type="entry name" value="Y_phosphoryl"/>
    <property type="match status" value="1"/>
</dbReference>
<dbReference type="PANTHER" id="PTHR10515">
    <property type="entry name" value="THYMIDINE PHOSPHORYLASE"/>
    <property type="match status" value="1"/>
</dbReference>
<dbReference type="PANTHER" id="PTHR10515:SF0">
    <property type="entry name" value="THYMIDINE PHOSPHORYLASE"/>
    <property type="match status" value="1"/>
</dbReference>
<dbReference type="Pfam" id="PF02885">
    <property type="entry name" value="Glycos_trans_3N"/>
    <property type="match status" value="1"/>
</dbReference>
<dbReference type="Pfam" id="PF00591">
    <property type="entry name" value="Glycos_transf_3"/>
    <property type="match status" value="1"/>
</dbReference>
<dbReference type="Pfam" id="PF07831">
    <property type="entry name" value="PYNP_C"/>
    <property type="match status" value="1"/>
</dbReference>
<dbReference type="PIRSF" id="PIRSF000478">
    <property type="entry name" value="TP_PyNP"/>
    <property type="match status" value="1"/>
</dbReference>
<dbReference type="SMART" id="SM00941">
    <property type="entry name" value="PYNP_C"/>
    <property type="match status" value="1"/>
</dbReference>
<dbReference type="SUPFAM" id="SSF52418">
    <property type="entry name" value="Nucleoside phosphorylase/phosphoribosyltransferase catalytic domain"/>
    <property type="match status" value="1"/>
</dbReference>
<dbReference type="SUPFAM" id="SSF47648">
    <property type="entry name" value="Nucleoside phosphorylase/phosphoribosyltransferase N-terminal domain"/>
    <property type="match status" value="1"/>
</dbReference>
<dbReference type="SUPFAM" id="SSF54680">
    <property type="entry name" value="Pyrimidine nucleoside phosphorylase C-terminal domain"/>
    <property type="match status" value="1"/>
</dbReference>
<dbReference type="PROSITE" id="PS00647">
    <property type="entry name" value="THYMID_PHOSPHORYLASE"/>
    <property type="match status" value="1"/>
</dbReference>
<feature type="chain" id="PRO_1000186264" description="Thymidine phosphorylase">
    <location>
        <begin position="1"/>
        <end position="438"/>
    </location>
</feature>
<keyword id="KW-0328">Glycosyltransferase</keyword>
<keyword id="KW-1185">Reference proteome</keyword>
<keyword id="KW-0808">Transferase</keyword>
<organism>
    <name type="scientific">Sinorhizobium fredii (strain NBRC 101917 / NGR234)</name>
    <dbReference type="NCBI Taxonomy" id="394"/>
    <lineage>
        <taxon>Bacteria</taxon>
        <taxon>Pseudomonadati</taxon>
        <taxon>Pseudomonadota</taxon>
        <taxon>Alphaproteobacteria</taxon>
        <taxon>Hyphomicrobiales</taxon>
        <taxon>Rhizobiaceae</taxon>
        <taxon>Sinorhizobium/Ensifer group</taxon>
        <taxon>Sinorhizobium</taxon>
    </lineage>
</organism>
<reference key="1">
    <citation type="journal article" date="2009" name="Appl. Environ. Microbiol.">
        <title>Rhizobium sp. strain NGR234 possesses a remarkable number of secretion systems.</title>
        <authorList>
            <person name="Schmeisser C."/>
            <person name="Liesegang H."/>
            <person name="Krysciak D."/>
            <person name="Bakkou N."/>
            <person name="Le Quere A."/>
            <person name="Wollherr A."/>
            <person name="Heinemeyer I."/>
            <person name="Morgenstern B."/>
            <person name="Pommerening-Roeser A."/>
            <person name="Flores M."/>
            <person name="Palacios R."/>
            <person name="Brenner S."/>
            <person name="Gottschalk G."/>
            <person name="Schmitz R.A."/>
            <person name="Broughton W.J."/>
            <person name="Perret X."/>
            <person name="Strittmatter A.W."/>
            <person name="Streit W.R."/>
        </authorList>
    </citation>
    <scope>NUCLEOTIDE SEQUENCE [LARGE SCALE GENOMIC DNA]</scope>
    <source>
        <strain>NBRC 101917 / NGR234</strain>
    </source>
</reference>